<keyword id="KW-0167">Capsid protein</keyword>
<keyword id="KW-0903">Direct protein sequencing</keyword>
<keyword id="KW-1035">Host cytoplasm</keyword>
<keyword id="KW-1152">Outer capsid protein</keyword>
<keyword id="KW-1185">Reference proteome</keyword>
<keyword id="KW-0946">Virion</keyword>
<organismHost>
    <name type="scientific">Nephotettix cincticeps</name>
    <name type="common">Green rice leafhopper</name>
    <name type="synonym">Selenocephalus cincticeps</name>
    <dbReference type="NCBI Taxonomy" id="94400"/>
</organismHost>
<organismHost>
    <name type="scientific">Oryza sativa</name>
    <name type="common">Rice</name>
    <dbReference type="NCBI Taxonomy" id="4530"/>
</organismHost>
<evidence type="ECO:0000250" key="1"/>
<evidence type="ECO:0000255" key="2">
    <source>
        <dbReference type="PROSITE-ProRule" id="PRU01205"/>
    </source>
</evidence>
<evidence type="ECO:0000305" key="3"/>
<proteinExistence type="evidence at protein level"/>
<comment type="function">
    <text evidence="3">Minor capsid protein present in the outer capsid, which is required for adsorption of the virus onto host insect cells.</text>
</comment>
<comment type="subcellular location">
    <subcellularLocation>
        <location evidence="3">Virion</location>
    </subcellularLocation>
    <subcellularLocation>
        <location evidence="1">Host cytoplasm</location>
    </subcellularLocation>
    <text evidence="1">Found in the peripheral regions of spherical cytoplasmic structures, called virus factories, that appear early after infection and are the site of viral replication and packaging.</text>
</comment>
<comment type="similarity">
    <text evidence="3">Belongs to the phytoreovirus minor outer capsid protein P2 family.</text>
</comment>
<name>P2_RGDV</name>
<reference key="1">
    <citation type="journal article" date="1997" name="Arch. Virol.">
        <title>The minor outer capsid protein P2 of rice gall dwarf virus has a primary structure conserved with, yet is chemically dissimilar to, rice dwarf virus P2, a protein associated with virus infectivity.</title>
        <authorList>
            <person name="Maruyama W."/>
            <person name="Ichimi K."/>
            <person name="Fukui Y."/>
            <person name="Yan J."/>
            <person name="Zhu Y."/>
            <person name="Kamiunten H."/>
            <person name="Omura T."/>
        </authorList>
    </citation>
    <scope>NUCLEOTIDE SEQUENCE [GENOMIC RNA]</scope>
    <scope>PROTEIN SEQUENCE OF 76-86</scope>
</reference>
<sequence length="1148" mass="127485">MSYPGNVHSLRDLYNVFKDAPNRERLILDMNSQLARIDNIAQILTMTEEQEKEVIAKMSASLANLGLNMDNAIRELKNMETVHMDRVSVLTVYQSAVLNITNNTHTISDSMKSIMYDLSGYVNTTIYPTIQSPATEDRSSLIPLNYKNMKNIFDDKHTIVFATVIGPQCVDFTTEDVTNISWIVDSHEIIKITYYPSSLIMETSIVGNRYLQYQLSLSNQTIDEYDNNGPYSCLLVFCVVGANGLLDIYSMSSQQVRKYVNDYEVGESSLIGYSTKHGSLHLSSNDIRNISHELSGSPYIDVRVTYSITAAFPDSQLLSMLLDNIQQSLGTLTACESKSFDDAYRAAMDNQFTKADVLTSSIITMRSSLNSLISSSPLLSDDTIRIVDDCTFQLASALTLTNEFASDSANLLGTFKVKQTTIDRYSNTKISEGKAVYLSPTLATMNVHSGSVVVSTDSFHNNNALKVMLLAPGLVKPDNVNFDLLSVKSNNVIDLVSDYKLDDAIIQFTDQPDYSSTTSIANAKSVVYMKTTGCIGLTYSNPNELILNMSLQLNSAAPSLGGVVNNNTTFSLTIGSTIINYVTDFEITDFTDSSGKQSLKLTSSVNLLTKLSVDMIFYAVSINAGGVIATDTHKYTDTGFDSSNYTYGWEMYDSAALNDYQDMTVVTPPKFTAKMLRPQDASKLNGDCVGGTYKKGRNILVIAGNRIFYNGVSVYFKMQKNSMISLKYFINPSGLSTVDTCDVRITRNAAFLTQIDTKLMSVQSVLNDVQRRIDIINQLMQPSRIQTLATIIQGIGGVVSLAMPLLGAIVVTIGAIVSIADPNHHGVDYQAVLNAFHSWCQYAVVARMNYGLLKADDPKLDILKRISDGSVNTFRNKPKKITLPGIDDEVIRGTSTDYIDTGINVRYNSMGLFGEGKLEEWMANTALKVQDGTANIFQKNLFSLLQKRKIVPMHARVEIIQTEKIGDVYRNTILYAGINEGSYIENSVYLTRSGNTRIKRLNMTSGPGMFKAVTESTTEVGNFKAVDWTLSGMTKEEIYNAAGLMYPNKNPAHSEVQDVYESVIRDMAEIDDTWVLQHHKTVMLPGQIEAFEHLIRVSANKFQYAFIGSNCQNFADDVVGILSQFKRPKRWVDENDFKQYIQSIYDEL</sequence>
<dbReference type="EMBL" id="D86439">
    <property type="protein sequence ID" value="BAA24136.1"/>
    <property type="molecule type" value="Genomic_RNA"/>
</dbReference>
<dbReference type="PIR" id="T00016">
    <property type="entry name" value="T00016"/>
</dbReference>
<dbReference type="RefSeq" id="YP_001111369.1">
    <property type="nucleotide sequence ID" value="NC_009244.1"/>
</dbReference>
<dbReference type="SMR" id="O56834"/>
<dbReference type="GeneID" id="5075721"/>
<dbReference type="KEGG" id="vg:5075721"/>
<dbReference type="OrthoDB" id="3619at10239"/>
<dbReference type="Proteomes" id="UP000006720">
    <property type="component" value="Genome"/>
</dbReference>
<dbReference type="GO" id="GO:0030430">
    <property type="term" value="C:host cell cytoplasm"/>
    <property type="evidence" value="ECO:0007669"/>
    <property type="project" value="UniProtKB-SubCell"/>
</dbReference>
<dbReference type="GO" id="GO:0039624">
    <property type="term" value="C:viral outer capsid"/>
    <property type="evidence" value="ECO:0007669"/>
    <property type="project" value="UniProtKB-KW"/>
</dbReference>
<dbReference type="GO" id="GO:0008233">
    <property type="term" value="F:peptidase activity"/>
    <property type="evidence" value="ECO:0007669"/>
    <property type="project" value="InterPro"/>
</dbReference>
<dbReference type="InterPro" id="IPR008580">
    <property type="entry name" value="PPPDE_dom"/>
</dbReference>
<dbReference type="Pfam" id="PF05903">
    <property type="entry name" value="Peptidase_C97"/>
    <property type="match status" value="1"/>
</dbReference>
<dbReference type="PROSITE" id="PS51858">
    <property type="entry name" value="PPPDE"/>
    <property type="match status" value="1"/>
</dbReference>
<organism>
    <name type="scientific">Rice gall dwarf virus</name>
    <name type="common">RGDV</name>
    <dbReference type="NCBI Taxonomy" id="10986"/>
    <lineage>
        <taxon>Viruses</taxon>
        <taxon>Riboviria</taxon>
        <taxon>Orthornavirae</taxon>
        <taxon>Duplornaviricota</taxon>
        <taxon>Resentoviricetes</taxon>
        <taxon>Reovirales</taxon>
        <taxon>Sedoreoviridae</taxon>
        <taxon>Phytoreovirus</taxon>
    </lineage>
</organism>
<feature type="chain" id="PRO_0000222781" description="Minor outer capsid protein P2">
    <location>
        <begin position="1"/>
        <end position="1148"/>
    </location>
</feature>
<feature type="domain" description="PPPDE" evidence="2">
    <location>
        <begin position="930"/>
        <end position="1148"/>
    </location>
</feature>
<feature type="active site" evidence="2">
    <location>
        <position position="954"/>
    </location>
</feature>
<feature type="active site" evidence="2">
    <location>
        <position position="1111"/>
    </location>
</feature>
<accession>O56834</accession>
<protein>
    <recommendedName>
        <fullName>Minor outer capsid protein P2</fullName>
    </recommendedName>
</protein>